<keyword id="KW-1185">Reference proteome</keyword>
<keyword id="KW-0687">Ribonucleoprotein</keyword>
<keyword id="KW-0689">Ribosomal protein</keyword>
<protein>
    <recommendedName>
        <fullName evidence="1">Small ribosomal subunit protein uS10</fullName>
    </recommendedName>
    <alternativeName>
        <fullName evidence="2">30S ribosomal protein S10</fullName>
    </alternativeName>
</protein>
<dbReference type="EMBL" id="AE015928">
    <property type="protein sequence ID" value="AAO77834.1"/>
    <property type="molecule type" value="Genomic_DNA"/>
</dbReference>
<dbReference type="RefSeq" id="NP_811640.1">
    <property type="nucleotide sequence ID" value="NC_004663.1"/>
</dbReference>
<dbReference type="RefSeq" id="WP_002558075.1">
    <property type="nucleotide sequence ID" value="NZ_UYXG01000001.1"/>
</dbReference>
<dbReference type="SMR" id="Q8A475"/>
<dbReference type="FunCoup" id="Q8A475">
    <property type="interactions" value="641"/>
</dbReference>
<dbReference type="STRING" id="226186.BT_2728"/>
<dbReference type="PaxDb" id="226186-BT_2728"/>
<dbReference type="EnsemblBacteria" id="AAO77834">
    <property type="protein sequence ID" value="AAO77834"/>
    <property type="gene ID" value="BT_2728"/>
</dbReference>
<dbReference type="GeneID" id="93449024"/>
<dbReference type="KEGG" id="bth:BT_2728"/>
<dbReference type="PATRIC" id="fig|226186.12.peg.2771"/>
<dbReference type="eggNOG" id="COG0051">
    <property type="taxonomic scope" value="Bacteria"/>
</dbReference>
<dbReference type="HOGENOM" id="CLU_122625_1_3_10"/>
<dbReference type="InParanoid" id="Q8A475"/>
<dbReference type="OrthoDB" id="9804464at2"/>
<dbReference type="PRO" id="PR:Q8A475"/>
<dbReference type="Proteomes" id="UP000001414">
    <property type="component" value="Chromosome"/>
</dbReference>
<dbReference type="GO" id="GO:0015935">
    <property type="term" value="C:small ribosomal subunit"/>
    <property type="evidence" value="ECO:0000318"/>
    <property type="project" value="GO_Central"/>
</dbReference>
<dbReference type="GO" id="GO:0003735">
    <property type="term" value="F:structural constituent of ribosome"/>
    <property type="evidence" value="ECO:0000318"/>
    <property type="project" value="GO_Central"/>
</dbReference>
<dbReference type="GO" id="GO:0000049">
    <property type="term" value="F:tRNA binding"/>
    <property type="evidence" value="ECO:0007669"/>
    <property type="project" value="UniProtKB-UniRule"/>
</dbReference>
<dbReference type="GO" id="GO:0006412">
    <property type="term" value="P:translation"/>
    <property type="evidence" value="ECO:0007669"/>
    <property type="project" value="UniProtKB-UniRule"/>
</dbReference>
<dbReference type="FunFam" id="3.30.70.600:FF:000003">
    <property type="entry name" value="30S ribosomal protein S10"/>
    <property type="match status" value="1"/>
</dbReference>
<dbReference type="Gene3D" id="3.30.70.600">
    <property type="entry name" value="Ribosomal protein S10 domain"/>
    <property type="match status" value="1"/>
</dbReference>
<dbReference type="HAMAP" id="MF_00508">
    <property type="entry name" value="Ribosomal_uS10"/>
    <property type="match status" value="1"/>
</dbReference>
<dbReference type="InterPro" id="IPR001848">
    <property type="entry name" value="Ribosomal_uS10"/>
</dbReference>
<dbReference type="InterPro" id="IPR018268">
    <property type="entry name" value="Ribosomal_uS10_CS"/>
</dbReference>
<dbReference type="InterPro" id="IPR027486">
    <property type="entry name" value="Ribosomal_uS10_dom"/>
</dbReference>
<dbReference type="InterPro" id="IPR036838">
    <property type="entry name" value="Ribosomal_uS10_dom_sf"/>
</dbReference>
<dbReference type="NCBIfam" id="NF001861">
    <property type="entry name" value="PRK00596.1"/>
    <property type="match status" value="1"/>
</dbReference>
<dbReference type="NCBIfam" id="TIGR01049">
    <property type="entry name" value="rpsJ_bact"/>
    <property type="match status" value="1"/>
</dbReference>
<dbReference type="PANTHER" id="PTHR11700">
    <property type="entry name" value="30S RIBOSOMAL PROTEIN S10 FAMILY MEMBER"/>
    <property type="match status" value="1"/>
</dbReference>
<dbReference type="Pfam" id="PF00338">
    <property type="entry name" value="Ribosomal_S10"/>
    <property type="match status" value="1"/>
</dbReference>
<dbReference type="PRINTS" id="PR00971">
    <property type="entry name" value="RIBOSOMALS10"/>
</dbReference>
<dbReference type="SMART" id="SM01403">
    <property type="entry name" value="Ribosomal_S10"/>
    <property type="match status" value="1"/>
</dbReference>
<dbReference type="SUPFAM" id="SSF54999">
    <property type="entry name" value="Ribosomal protein S10"/>
    <property type="match status" value="1"/>
</dbReference>
<dbReference type="PROSITE" id="PS00361">
    <property type="entry name" value="RIBOSOMAL_S10"/>
    <property type="match status" value="1"/>
</dbReference>
<organism>
    <name type="scientific">Bacteroides thetaiotaomicron (strain ATCC 29148 / DSM 2079 / JCM 5827 / CCUG 10774 / NCTC 10582 / VPI-5482 / E50)</name>
    <dbReference type="NCBI Taxonomy" id="226186"/>
    <lineage>
        <taxon>Bacteria</taxon>
        <taxon>Pseudomonadati</taxon>
        <taxon>Bacteroidota</taxon>
        <taxon>Bacteroidia</taxon>
        <taxon>Bacteroidales</taxon>
        <taxon>Bacteroidaceae</taxon>
        <taxon>Bacteroides</taxon>
    </lineage>
</organism>
<name>RS10_BACTN</name>
<reference key="1">
    <citation type="journal article" date="2003" name="Science">
        <title>A genomic view of the human-Bacteroides thetaiotaomicron symbiosis.</title>
        <authorList>
            <person name="Xu J."/>
            <person name="Bjursell M.K."/>
            <person name="Himrod J."/>
            <person name="Deng S."/>
            <person name="Carmichael L.K."/>
            <person name="Chiang H.C."/>
            <person name="Hooper L.V."/>
            <person name="Gordon J.I."/>
        </authorList>
    </citation>
    <scope>NUCLEOTIDE SEQUENCE [LARGE SCALE GENOMIC DNA]</scope>
    <source>
        <strain>ATCC 29148 / DSM 2079 / JCM 5827 / CCUG 10774 / NCTC 10582 / VPI-5482 / E50</strain>
    </source>
</reference>
<sequence length="101" mass="11418">MSQKIRIKLKSYDHNLVDKSAEKIVRTVKATGAIVSGPIPLPTHKRIFTVNRSTFVNKKSREQFELSSYKRLIDIYSSTAKTVDALMKLELPSGVEVEIKV</sequence>
<gene>
    <name evidence="1" type="primary">rpsJ</name>
    <name type="ordered locus">BT_2728</name>
</gene>
<feature type="chain" id="PRO_0000146496" description="Small ribosomal subunit protein uS10">
    <location>
        <begin position="1"/>
        <end position="101"/>
    </location>
</feature>
<accession>Q8A475</accession>
<comment type="function">
    <text evidence="1">Involved in the binding of tRNA to the ribosomes.</text>
</comment>
<comment type="subunit">
    <text evidence="1">Part of the 30S ribosomal subunit.</text>
</comment>
<comment type="similarity">
    <text evidence="1">Belongs to the universal ribosomal protein uS10 family.</text>
</comment>
<evidence type="ECO:0000255" key="1">
    <source>
        <dbReference type="HAMAP-Rule" id="MF_00508"/>
    </source>
</evidence>
<evidence type="ECO:0000305" key="2"/>
<proteinExistence type="inferred from homology"/>